<comment type="function">
    <text evidence="1">Molecular chaperone; binds unfolded polypeptides in vitro, and has a weak ATPase activity.</text>
</comment>
<comment type="subunit">
    <text evidence="1">Forms an oligomeric complex of eight-membered rings.</text>
</comment>
<comment type="similarity">
    <text evidence="3">Belongs to the TCP-1 chaperonin family.</text>
</comment>
<comment type="sequence caution" evidence="3">
    <conflict type="erroneous initiation">
        <sequence resource="EMBL-CDS" id="AAG20240"/>
    </conflict>
</comment>
<name>THSB_HALSA</name>
<protein>
    <recommendedName>
        <fullName>Thermosome subunit beta</fullName>
    </recommendedName>
    <alternativeName>
        <fullName>Chaperonin subunit beta</fullName>
    </alternativeName>
    <alternativeName>
        <fullName>Thermosome subunit 2</fullName>
    </alternativeName>
</protein>
<gene>
    <name type="primary">thsB</name>
    <name type="synonym">cctB</name>
    <name type="ordered locus">VNG_2096G</name>
</gene>
<sequence>MAQQQRMQGQPMIIMGDDAQRVKDRDAQEHNISAARAVADAVRSTLGPKGMDKMLVSSMGDVTVTNDGVTILQEMDIDNPTAEMIVEVAETQEDEAGDGTTTAVAIAGELLKNAEDLLERDIHPTAIIKGYNLAAEQAREEVDNVAVDVDPDDKDLIRSVAETSMTGKGAELDKELLSSIIYDAVNQVAVETNDGGIVVDAANINIETQTGHGVNESQLLRGAAISKDPVHDQMPAAVEDADVLLLNEAIEVEEAEADTSVNIESPDQLQSFLDQEEKQLKEKVQQIADTGANVVFCQKGIDDMAQHYLAKEGILAVRRTKKSDIEFLTNVLDASVVTDLDAASEADVVAGSVTRDSDDELFYVEGESEQAHGVTLLLRGSTDHVVDELERGVSDALDVSAQTLSDGRVLPGGGATEVEVASRLRDFADSVSGREQLAVEAFADSLELVPRVLAENAGLDSIDTLVDLRSAHENDDDEHIGLNVLSGDLEDTFEAGVVEPAHAKEQAVTSASEAANLVLKIDDIISAGDLSTDKGDDDGGAGGMGGGMGGGMGGMM</sequence>
<accession>Q9HNI0</accession>
<feature type="chain" id="PRO_0000128386" description="Thermosome subunit beta">
    <location>
        <begin position="1"/>
        <end position="556"/>
    </location>
</feature>
<feature type="region of interest" description="Disordered" evidence="2">
    <location>
        <begin position="530"/>
        <end position="556"/>
    </location>
</feature>
<feature type="compositionally biased region" description="Gly residues" evidence="2">
    <location>
        <begin position="540"/>
        <end position="556"/>
    </location>
</feature>
<organism>
    <name type="scientific">Halobacterium salinarum (strain ATCC 700922 / JCM 11081 / NRC-1)</name>
    <name type="common">Halobacterium halobium</name>
    <dbReference type="NCBI Taxonomy" id="64091"/>
    <lineage>
        <taxon>Archaea</taxon>
        <taxon>Methanobacteriati</taxon>
        <taxon>Methanobacteriota</taxon>
        <taxon>Stenosarchaea group</taxon>
        <taxon>Halobacteria</taxon>
        <taxon>Halobacteriales</taxon>
        <taxon>Halobacteriaceae</taxon>
        <taxon>Halobacterium</taxon>
        <taxon>Halobacterium salinarum NRC-34001</taxon>
    </lineage>
</organism>
<proteinExistence type="inferred from homology"/>
<evidence type="ECO:0000250" key="1"/>
<evidence type="ECO:0000256" key="2">
    <source>
        <dbReference type="SAM" id="MobiDB-lite"/>
    </source>
</evidence>
<evidence type="ECO:0000305" key="3"/>
<reference key="1">
    <citation type="journal article" date="2000" name="Proc. Natl. Acad. Sci. U.S.A.">
        <title>Genome sequence of Halobacterium species NRC-1.</title>
        <authorList>
            <person name="Ng W.V."/>
            <person name="Kennedy S.P."/>
            <person name="Mahairas G.G."/>
            <person name="Berquist B."/>
            <person name="Pan M."/>
            <person name="Shukla H.D."/>
            <person name="Lasky S.R."/>
            <person name="Baliga N.S."/>
            <person name="Thorsson V."/>
            <person name="Sbrogna J."/>
            <person name="Swartzell S."/>
            <person name="Weir D."/>
            <person name="Hall J."/>
            <person name="Dahl T.A."/>
            <person name="Welti R."/>
            <person name="Goo Y.A."/>
            <person name="Leithauser B."/>
            <person name="Keller K."/>
            <person name="Cruz R."/>
            <person name="Danson M.J."/>
            <person name="Hough D.W."/>
            <person name="Maddocks D.G."/>
            <person name="Jablonski P.E."/>
            <person name="Krebs M.P."/>
            <person name="Angevine C.M."/>
            <person name="Dale H."/>
            <person name="Isenbarger T.A."/>
            <person name="Peck R.F."/>
            <person name="Pohlschroder M."/>
            <person name="Spudich J.L."/>
            <person name="Jung K.-H."/>
            <person name="Alam M."/>
            <person name="Freitas T."/>
            <person name="Hou S."/>
            <person name="Daniels C.J."/>
            <person name="Dennis P.P."/>
            <person name="Omer A.D."/>
            <person name="Ebhardt H."/>
            <person name="Lowe T.M."/>
            <person name="Liang P."/>
            <person name="Riley M."/>
            <person name="Hood L."/>
            <person name="DasSarma S."/>
        </authorList>
    </citation>
    <scope>NUCLEOTIDE SEQUENCE [LARGE SCALE GENOMIC DNA]</scope>
    <source>
        <strain>ATCC 700922 / JCM 11081 / NRC-1</strain>
    </source>
</reference>
<dbReference type="EMBL" id="AE004437">
    <property type="protein sequence ID" value="AAG20240.1"/>
    <property type="status" value="ALT_INIT"/>
    <property type="molecule type" value="Genomic_DNA"/>
</dbReference>
<dbReference type="PIR" id="D84359">
    <property type="entry name" value="D84359"/>
</dbReference>
<dbReference type="SMR" id="Q9HNI0"/>
<dbReference type="STRING" id="64091.VNG_2096G"/>
<dbReference type="PaxDb" id="64091-VNG_2096G"/>
<dbReference type="KEGG" id="hal:VNG_2096G"/>
<dbReference type="PATRIC" id="fig|64091.14.peg.1600"/>
<dbReference type="HOGENOM" id="CLU_008891_7_3_2"/>
<dbReference type="InParanoid" id="Q9HNI0"/>
<dbReference type="PhylomeDB" id="Q9HNI0"/>
<dbReference type="Proteomes" id="UP000000554">
    <property type="component" value="Chromosome"/>
</dbReference>
<dbReference type="GO" id="GO:0005524">
    <property type="term" value="F:ATP binding"/>
    <property type="evidence" value="ECO:0007669"/>
    <property type="project" value="UniProtKB-KW"/>
</dbReference>
<dbReference type="GO" id="GO:0016887">
    <property type="term" value="F:ATP hydrolysis activity"/>
    <property type="evidence" value="ECO:0007669"/>
    <property type="project" value="InterPro"/>
</dbReference>
<dbReference type="GO" id="GO:0140662">
    <property type="term" value="F:ATP-dependent protein folding chaperone"/>
    <property type="evidence" value="ECO:0007669"/>
    <property type="project" value="InterPro"/>
</dbReference>
<dbReference type="GO" id="GO:0051082">
    <property type="term" value="F:unfolded protein binding"/>
    <property type="evidence" value="ECO:0000318"/>
    <property type="project" value="GO_Central"/>
</dbReference>
<dbReference type="GO" id="GO:0006457">
    <property type="term" value="P:protein folding"/>
    <property type="evidence" value="ECO:0000318"/>
    <property type="project" value="GO_Central"/>
</dbReference>
<dbReference type="CDD" id="cd03343">
    <property type="entry name" value="cpn60"/>
    <property type="match status" value="1"/>
</dbReference>
<dbReference type="Gene3D" id="3.50.7.10">
    <property type="entry name" value="GroEL"/>
    <property type="match status" value="1"/>
</dbReference>
<dbReference type="Gene3D" id="1.10.560.10">
    <property type="entry name" value="GroEL-like equatorial domain"/>
    <property type="match status" value="1"/>
</dbReference>
<dbReference type="Gene3D" id="3.30.260.10">
    <property type="entry name" value="TCP-1-like chaperonin intermediate domain"/>
    <property type="match status" value="1"/>
</dbReference>
<dbReference type="InterPro" id="IPR017998">
    <property type="entry name" value="Chaperone_TCP-1"/>
</dbReference>
<dbReference type="InterPro" id="IPR002194">
    <property type="entry name" value="Chaperonin_TCP-1_CS"/>
</dbReference>
<dbReference type="InterPro" id="IPR002423">
    <property type="entry name" value="Cpn60/GroEL/TCP-1"/>
</dbReference>
<dbReference type="InterPro" id="IPR027409">
    <property type="entry name" value="GroEL-like_apical_dom_sf"/>
</dbReference>
<dbReference type="InterPro" id="IPR027413">
    <property type="entry name" value="GROEL-like_equatorial_sf"/>
</dbReference>
<dbReference type="InterPro" id="IPR027410">
    <property type="entry name" value="TCP-1-like_intermed_sf"/>
</dbReference>
<dbReference type="InterPro" id="IPR053374">
    <property type="entry name" value="TCP-1_chaperonin"/>
</dbReference>
<dbReference type="InterPro" id="IPR054827">
    <property type="entry name" value="thermosome_alpha"/>
</dbReference>
<dbReference type="InterPro" id="IPR012714">
    <property type="entry name" value="Thermosome_arc"/>
</dbReference>
<dbReference type="NCBIfam" id="NF041082">
    <property type="entry name" value="thermosome_alpha"/>
    <property type="match status" value="1"/>
</dbReference>
<dbReference type="NCBIfam" id="TIGR02339">
    <property type="entry name" value="thermosome_arch"/>
    <property type="match status" value="1"/>
</dbReference>
<dbReference type="NCBIfam" id="NF041083">
    <property type="entry name" value="thermosome_beta"/>
    <property type="match status" value="1"/>
</dbReference>
<dbReference type="PANTHER" id="PTHR11353">
    <property type="entry name" value="CHAPERONIN"/>
    <property type="match status" value="1"/>
</dbReference>
<dbReference type="Pfam" id="PF00118">
    <property type="entry name" value="Cpn60_TCP1"/>
    <property type="match status" value="1"/>
</dbReference>
<dbReference type="PRINTS" id="PR00304">
    <property type="entry name" value="TCOMPLEXTCP1"/>
</dbReference>
<dbReference type="SUPFAM" id="SSF52029">
    <property type="entry name" value="GroEL apical domain-like"/>
    <property type="match status" value="1"/>
</dbReference>
<dbReference type="SUPFAM" id="SSF48592">
    <property type="entry name" value="GroEL equatorial domain-like"/>
    <property type="match status" value="1"/>
</dbReference>
<dbReference type="SUPFAM" id="SSF54849">
    <property type="entry name" value="GroEL-intermediate domain like"/>
    <property type="match status" value="1"/>
</dbReference>
<dbReference type="PROSITE" id="PS00750">
    <property type="entry name" value="TCP1_1"/>
    <property type="match status" value="1"/>
</dbReference>
<dbReference type="PROSITE" id="PS00751">
    <property type="entry name" value="TCP1_2"/>
    <property type="match status" value="1"/>
</dbReference>
<dbReference type="PROSITE" id="PS00995">
    <property type="entry name" value="TCP1_3"/>
    <property type="match status" value="1"/>
</dbReference>
<keyword id="KW-0067">ATP-binding</keyword>
<keyword id="KW-0143">Chaperone</keyword>
<keyword id="KW-0547">Nucleotide-binding</keyword>
<keyword id="KW-1185">Reference proteome</keyword>